<organism>
    <name type="scientific">Enterobacter sp. (strain 638)</name>
    <dbReference type="NCBI Taxonomy" id="399742"/>
    <lineage>
        <taxon>Bacteria</taxon>
        <taxon>Pseudomonadati</taxon>
        <taxon>Pseudomonadota</taxon>
        <taxon>Gammaproteobacteria</taxon>
        <taxon>Enterobacterales</taxon>
        <taxon>Enterobacteriaceae</taxon>
        <taxon>Enterobacter</taxon>
    </lineage>
</organism>
<accession>A4WEY0</accession>
<reference key="1">
    <citation type="journal article" date="2010" name="PLoS Genet.">
        <title>Genome sequence of the plant growth promoting endophytic bacterium Enterobacter sp. 638.</title>
        <authorList>
            <person name="Taghavi S."/>
            <person name="van der Lelie D."/>
            <person name="Hoffman A."/>
            <person name="Zhang Y.B."/>
            <person name="Walla M.D."/>
            <person name="Vangronsveld J."/>
            <person name="Newman L."/>
            <person name="Monchy S."/>
        </authorList>
    </citation>
    <scope>NUCLEOTIDE SEQUENCE [LARGE SCALE GENOMIC DNA]</scope>
    <source>
        <strain>638</strain>
    </source>
</reference>
<evidence type="ECO:0000255" key="1">
    <source>
        <dbReference type="HAMAP-Rule" id="MF_01343"/>
    </source>
</evidence>
<evidence type="ECO:0000305" key="2"/>
<comment type="function">
    <text evidence="1">One of the primary rRNA binding proteins, it binds directly to 16S rRNA where it helps nucleate assembly of the platform of the 30S subunit by binding and bridging several RNA helices of the 16S rRNA.</text>
</comment>
<comment type="function">
    <text evidence="1">Forms an intersubunit bridge (bridge B4) with the 23S rRNA of the 50S subunit in the ribosome.</text>
</comment>
<comment type="subunit">
    <text evidence="1">Part of the 30S ribosomal subunit. Forms a bridge to the 50S subunit in the 70S ribosome, contacting the 23S rRNA.</text>
</comment>
<comment type="similarity">
    <text evidence="1">Belongs to the universal ribosomal protein uS15 family.</text>
</comment>
<keyword id="KW-0687">Ribonucleoprotein</keyword>
<keyword id="KW-0689">Ribosomal protein</keyword>
<keyword id="KW-0694">RNA-binding</keyword>
<keyword id="KW-0699">rRNA-binding</keyword>
<dbReference type="EMBL" id="CP000653">
    <property type="protein sequence ID" value="ABP62260.1"/>
    <property type="molecule type" value="Genomic_DNA"/>
</dbReference>
<dbReference type="RefSeq" id="WP_003861789.1">
    <property type="nucleotide sequence ID" value="NC_009436.1"/>
</dbReference>
<dbReference type="SMR" id="A4WEY0"/>
<dbReference type="STRING" id="399742.Ent638_3602"/>
<dbReference type="GeneID" id="97603511"/>
<dbReference type="KEGG" id="ent:Ent638_3602"/>
<dbReference type="eggNOG" id="COG0184">
    <property type="taxonomic scope" value="Bacteria"/>
</dbReference>
<dbReference type="HOGENOM" id="CLU_148518_0_0_6"/>
<dbReference type="OrthoDB" id="9799262at2"/>
<dbReference type="Proteomes" id="UP000000230">
    <property type="component" value="Chromosome"/>
</dbReference>
<dbReference type="GO" id="GO:0022627">
    <property type="term" value="C:cytosolic small ribosomal subunit"/>
    <property type="evidence" value="ECO:0007669"/>
    <property type="project" value="TreeGrafter"/>
</dbReference>
<dbReference type="GO" id="GO:0019843">
    <property type="term" value="F:rRNA binding"/>
    <property type="evidence" value="ECO:0007669"/>
    <property type="project" value="UniProtKB-UniRule"/>
</dbReference>
<dbReference type="GO" id="GO:0003735">
    <property type="term" value="F:structural constituent of ribosome"/>
    <property type="evidence" value="ECO:0007669"/>
    <property type="project" value="InterPro"/>
</dbReference>
<dbReference type="GO" id="GO:0006412">
    <property type="term" value="P:translation"/>
    <property type="evidence" value="ECO:0007669"/>
    <property type="project" value="UniProtKB-UniRule"/>
</dbReference>
<dbReference type="CDD" id="cd00353">
    <property type="entry name" value="Ribosomal_S15p_S13e"/>
    <property type="match status" value="1"/>
</dbReference>
<dbReference type="FunFam" id="1.10.287.10:FF:000002">
    <property type="entry name" value="30S ribosomal protein S15"/>
    <property type="match status" value="1"/>
</dbReference>
<dbReference type="Gene3D" id="6.10.250.3130">
    <property type="match status" value="1"/>
</dbReference>
<dbReference type="Gene3D" id="1.10.287.10">
    <property type="entry name" value="S15/NS1, RNA-binding"/>
    <property type="match status" value="1"/>
</dbReference>
<dbReference type="HAMAP" id="MF_01343_B">
    <property type="entry name" value="Ribosomal_uS15_B"/>
    <property type="match status" value="1"/>
</dbReference>
<dbReference type="InterPro" id="IPR000589">
    <property type="entry name" value="Ribosomal_uS15"/>
</dbReference>
<dbReference type="InterPro" id="IPR005290">
    <property type="entry name" value="Ribosomal_uS15_bac-type"/>
</dbReference>
<dbReference type="InterPro" id="IPR009068">
    <property type="entry name" value="uS15_NS1_RNA-bd_sf"/>
</dbReference>
<dbReference type="NCBIfam" id="TIGR00952">
    <property type="entry name" value="S15_bact"/>
    <property type="match status" value="1"/>
</dbReference>
<dbReference type="PANTHER" id="PTHR23321">
    <property type="entry name" value="RIBOSOMAL PROTEIN S15, BACTERIAL AND ORGANELLAR"/>
    <property type="match status" value="1"/>
</dbReference>
<dbReference type="PANTHER" id="PTHR23321:SF26">
    <property type="entry name" value="SMALL RIBOSOMAL SUBUNIT PROTEIN US15M"/>
    <property type="match status" value="1"/>
</dbReference>
<dbReference type="Pfam" id="PF00312">
    <property type="entry name" value="Ribosomal_S15"/>
    <property type="match status" value="1"/>
</dbReference>
<dbReference type="SMART" id="SM01387">
    <property type="entry name" value="Ribosomal_S15"/>
    <property type="match status" value="1"/>
</dbReference>
<dbReference type="SUPFAM" id="SSF47060">
    <property type="entry name" value="S15/NS1 RNA-binding domain"/>
    <property type="match status" value="1"/>
</dbReference>
<dbReference type="PROSITE" id="PS00362">
    <property type="entry name" value="RIBOSOMAL_S15"/>
    <property type="match status" value="1"/>
</dbReference>
<proteinExistence type="inferred from homology"/>
<name>RS15_ENT38</name>
<protein>
    <recommendedName>
        <fullName evidence="1">Small ribosomal subunit protein uS15</fullName>
    </recommendedName>
    <alternativeName>
        <fullName evidence="2">30S ribosomal protein S15</fullName>
    </alternativeName>
</protein>
<sequence>MSLSVEAKAKIVSEFGRGTNDSGSTEVQVALLTAQINHLQGHFAEHKKDHHSRRGLLRMVSQRRKLLDYLKRKDVARYTALIERLGLRR</sequence>
<gene>
    <name evidence="1" type="primary">rpsO</name>
    <name type="ordered locus">Ent638_3602</name>
</gene>
<feature type="chain" id="PRO_1000067689" description="Small ribosomal subunit protein uS15">
    <location>
        <begin position="1"/>
        <end position="89"/>
    </location>
</feature>